<organism>
    <name type="scientific">Opitutus terrae (strain DSM 11246 / JCM 15787 / PB90-1)</name>
    <dbReference type="NCBI Taxonomy" id="452637"/>
    <lineage>
        <taxon>Bacteria</taxon>
        <taxon>Pseudomonadati</taxon>
        <taxon>Verrucomicrobiota</taxon>
        <taxon>Opitutia</taxon>
        <taxon>Opitutales</taxon>
        <taxon>Opitutaceae</taxon>
        <taxon>Opitutus</taxon>
    </lineage>
</organism>
<reference key="1">
    <citation type="journal article" date="2011" name="J. Bacteriol.">
        <title>Genome sequence of the verrucomicrobium Opitutus terrae PB90-1, an abundant inhabitant of rice paddy soil ecosystems.</title>
        <authorList>
            <person name="van Passel M.W."/>
            <person name="Kant R."/>
            <person name="Palva A."/>
            <person name="Copeland A."/>
            <person name="Lucas S."/>
            <person name="Lapidus A."/>
            <person name="Glavina del Rio T."/>
            <person name="Pitluck S."/>
            <person name="Goltsman E."/>
            <person name="Clum A."/>
            <person name="Sun H."/>
            <person name="Schmutz J."/>
            <person name="Larimer F.W."/>
            <person name="Land M.L."/>
            <person name="Hauser L."/>
            <person name="Kyrpides N."/>
            <person name="Mikhailova N."/>
            <person name="Richardson P.P."/>
            <person name="Janssen P.H."/>
            <person name="de Vos W.M."/>
            <person name="Smidt H."/>
        </authorList>
    </citation>
    <scope>NUCLEOTIDE SEQUENCE [LARGE SCALE GENOMIC DNA]</scope>
    <source>
        <strain>DSM 11246 / JCM 15787 / PB90-1</strain>
    </source>
</reference>
<proteinExistence type="inferred from homology"/>
<name>RL24_OPITP</name>
<comment type="function">
    <text evidence="1">One of two assembly initiator proteins, it binds directly to the 5'-end of the 23S rRNA, where it nucleates assembly of the 50S subunit.</text>
</comment>
<comment type="function">
    <text evidence="1">One of the proteins that surrounds the polypeptide exit tunnel on the outside of the subunit.</text>
</comment>
<comment type="subunit">
    <text evidence="1">Part of the 50S ribosomal subunit.</text>
</comment>
<comment type="similarity">
    <text evidence="1">Belongs to the universal ribosomal protein uL24 family.</text>
</comment>
<protein>
    <recommendedName>
        <fullName evidence="1">Large ribosomal subunit protein uL24</fullName>
    </recommendedName>
    <alternativeName>
        <fullName evidence="2">50S ribosomal protein L24</fullName>
    </alternativeName>
</protein>
<evidence type="ECO:0000255" key="1">
    <source>
        <dbReference type="HAMAP-Rule" id="MF_01326"/>
    </source>
</evidence>
<evidence type="ECO:0000305" key="2"/>
<keyword id="KW-1185">Reference proteome</keyword>
<keyword id="KW-0687">Ribonucleoprotein</keyword>
<keyword id="KW-0689">Ribosomal protein</keyword>
<keyword id="KW-0694">RNA-binding</keyword>
<keyword id="KW-0699">rRNA-binding</keyword>
<dbReference type="EMBL" id="CP001032">
    <property type="protein sequence ID" value="ACB73506.1"/>
    <property type="molecule type" value="Genomic_DNA"/>
</dbReference>
<dbReference type="RefSeq" id="WP_012373044.1">
    <property type="nucleotide sequence ID" value="NC_010571.1"/>
</dbReference>
<dbReference type="SMR" id="B1ZND7"/>
<dbReference type="STRING" id="452637.Oter_0215"/>
<dbReference type="KEGG" id="ote:Oter_0215"/>
<dbReference type="eggNOG" id="COG0198">
    <property type="taxonomic scope" value="Bacteria"/>
</dbReference>
<dbReference type="HOGENOM" id="CLU_093315_3_0_0"/>
<dbReference type="OrthoDB" id="9807419at2"/>
<dbReference type="Proteomes" id="UP000007013">
    <property type="component" value="Chromosome"/>
</dbReference>
<dbReference type="GO" id="GO:1990904">
    <property type="term" value="C:ribonucleoprotein complex"/>
    <property type="evidence" value="ECO:0007669"/>
    <property type="project" value="UniProtKB-KW"/>
</dbReference>
<dbReference type="GO" id="GO:0005840">
    <property type="term" value="C:ribosome"/>
    <property type="evidence" value="ECO:0007669"/>
    <property type="project" value="UniProtKB-KW"/>
</dbReference>
<dbReference type="GO" id="GO:0019843">
    <property type="term" value="F:rRNA binding"/>
    <property type="evidence" value="ECO:0007669"/>
    <property type="project" value="UniProtKB-UniRule"/>
</dbReference>
<dbReference type="GO" id="GO:0003735">
    <property type="term" value="F:structural constituent of ribosome"/>
    <property type="evidence" value="ECO:0007669"/>
    <property type="project" value="InterPro"/>
</dbReference>
<dbReference type="GO" id="GO:0006412">
    <property type="term" value="P:translation"/>
    <property type="evidence" value="ECO:0007669"/>
    <property type="project" value="UniProtKB-UniRule"/>
</dbReference>
<dbReference type="CDD" id="cd06089">
    <property type="entry name" value="KOW_RPL26"/>
    <property type="match status" value="1"/>
</dbReference>
<dbReference type="Gene3D" id="2.30.30.30">
    <property type="match status" value="1"/>
</dbReference>
<dbReference type="HAMAP" id="MF_01326_B">
    <property type="entry name" value="Ribosomal_uL24_B"/>
    <property type="match status" value="1"/>
</dbReference>
<dbReference type="InterPro" id="IPR005824">
    <property type="entry name" value="KOW"/>
</dbReference>
<dbReference type="InterPro" id="IPR014722">
    <property type="entry name" value="Rib_uL2_dom2"/>
</dbReference>
<dbReference type="InterPro" id="IPR003256">
    <property type="entry name" value="Ribosomal_uL24"/>
</dbReference>
<dbReference type="InterPro" id="IPR005825">
    <property type="entry name" value="Ribosomal_uL24_CS"/>
</dbReference>
<dbReference type="InterPro" id="IPR041988">
    <property type="entry name" value="Ribosomal_uL24_KOW"/>
</dbReference>
<dbReference type="InterPro" id="IPR008991">
    <property type="entry name" value="Translation_prot_SH3-like_sf"/>
</dbReference>
<dbReference type="NCBIfam" id="TIGR01079">
    <property type="entry name" value="rplX_bact"/>
    <property type="match status" value="1"/>
</dbReference>
<dbReference type="PANTHER" id="PTHR12903">
    <property type="entry name" value="MITOCHONDRIAL RIBOSOMAL PROTEIN L24"/>
    <property type="match status" value="1"/>
</dbReference>
<dbReference type="Pfam" id="PF00467">
    <property type="entry name" value="KOW"/>
    <property type="match status" value="1"/>
</dbReference>
<dbReference type="Pfam" id="PF17136">
    <property type="entry name" value="ribosomal_L24"/>
    <property type="match status" value="1"/>
</dbReference>
<dbReference type="SMART" id="SM00739">
    <property type="entry name" value="KOW"/>
    <property type="match status" value="1"/>
</dbReference>
<dbReference type="SUPFAM" id="SSF50104">
    <property type="entry name" value="Translation proteins SH3-like domain"/>
    <property type="match status" value="1"/>
</dbReference>
<dbReference type="PROSITE" id="PS01108">
    <property type="entry name" value="RIBOSOMAL_L24"/>
    <property type="match status" value="1"/>
</dbReference>
<gene>
    <name evidence="1" type="primary">rplX</name>
    <name type="ordered locus">Oter_0215</name>
</gene>
<sequence length="92" mass="10057">MAQKFHVKRGDQVVVIAGSQKGKSGKVLEVLAAKQRARIEGVAMIKRHLKKSQEHPQGTIAEREGSVHISNLMLQSTFDASKRKKEAAPAKA</sequence>
<accession>B1ZND7</accession>
<feature type="chain" id="PRO_0000355702" description="Large ribosomal subunit protein uL24">
    <location>
        <begin position="1"/>
        <end position="92"/>
    </location>
</feature>